<comment type="function">
    <text>Transcriptional repressor.</text>
</comment>
<comment type="subunit">
    <text evidence="4">Self-associates. Interacts with HIC1.</text>
</comment>
<comment type="interaction">
    <interactant intactId="EBI-726282">
        <id>Q96JB3</id>
    </interactant>
    <interactant intactId="EBI-739624">
        <id>Q8NHQ1</id>
        <label>CEP70</label>
    </interactant>
    <organismsDiffer>false</organismsDiffer>
    <experiments>3</experiments>
</comment>
<comment type="interaction">
    <interactant intactId="EBI-726282">
        <id>Q96JB3</id>
    </interactant>
    <interactant intactId="EBI-744366">
        <id>Q96KQ7</id>
        <label>EHMT2</label>
    </interactant>
    <organismsDiffer>false</organismsDiffer>
    <experiments>3</experiments>
</comment>
<comment type="interaction">
    <interactant intactId="EBI-726282">
        <id>Q96JB3</id>
    </interactant>
    <interactant intactId="EBI-742740">
        <id>Q96BR9</id>
        <label>ZBTB8A</label>
    </interactant>
    <organismsDiffer>false</organismsDiffer>
    <experiments>5</experiments>
</comment>
<comment type="subcellular location">
    <subcellularLocation>
        <location>Nucleus</location>
    </subcellularLocation>
</comment>
<comment type="alternative products">
    <event type="alternative splicing"/>
    <isoform>
        <id>Q96JB3-1</id>
        <name>1</name>
        <sequence type="displayed"/>
    </isoform>
    <isoform>
        <id>Q96JB3-2</id>
        <name>2</name>
        <sequence type="described" ref="VSP_006829"/>
    </isoform>
</comment>
<comment type="tissue specificity">
    <text>Highest levels in cerebellum.</text>
</comment>
<comment type="similarity">
    <text evidence="6">Belongs to the krueppel C2H2-type zinc-finger protein family. Hic subfamily.</text>
</comment>
<comment type="sequence caution" evidence="6">
    <conflict type="erroneous initiation">
        <sequence resource="EMBL-CDS" id="BAA82972"/>
    </conflict>
</comment>
<reference key="1">
    <citation type="journal article" date="2001" name="Biochem. Biophys. Res. Commun.">
        <title>Characterization of HRG22, a human homologue of the putative tumor suppressor gene HIC1.</title>
        <authorList>
            <person name="Deltour S."/>
            <person name="Pinte S."/>
            <person name="Guerardel C."/>
            <person name="Leprince D."/>
        </authorList>
    </citation>
    <scope>NUCLEOTIDE SEQUENCE [MRNA] OF 1-85 (ISOFORM 1)</scope>
    <scope>ALTERNATIVE SPLICING</scope>
    <scope>SELF-ASSOCIATION</scope>
    <scope>INTERACTION WITH HIC1</scope>
</reference>
<reference key="2">
    <citation type="submission" date="2001-02" db="EMBL/GenBank/DDBJ databases">
        <title>Complete deduced structure of HIC-3, a novel human btb/poz and ZF factor of the HIC family.</title>
        <authorList>
            <person name="Alliel P.M."/>
            <person name="Goudou D."/>
            <person name="Bitoun M."/>
            <person name="Seddiqi N."/>
            <person name="Rieger F."/>
            <person name="Perin J.-P."/>
        </authorList>
    </citation>
    <scope>NUCLEOTIDE SEQUENCE [MRNA] (ISOFORM 2)</scope>
    <source>
        <tissue>Brain</tissue>
    </source>
</reference>
<reference key="3">
    <citation type="journal article" date="1999" name="DNA Res.">
        <title>Prediction of the coding sequences of unidentified human genes. XIV. The complete sequences of 100 new cDNA clones from brain which code for large proteins in vitro.</title>
        <authorList>
            <person name="Kikuno R."/>
            <person name="Nagase T."/>
            <person name="Ishikawa K."/>
            <person name="Hirosawa M."/>
            <person name="Miyajima N."/>
            <person name="Tanaka A."/>
            <person name="Kotani H."/>
            <person name="Nomura N."/>
            <person name="Ohara O."/>
        </authorList>
    </citation>
    <scope>NUCLEOTIDE SEQUENCE [LARGE SCALE MRNA] (ISOFORM 1)</scope>
    <source>
        <tissue>Brain</tissue>
    </source>
</reference>
<reference key="4">
    <citation type="journal article" date="2002" name="DNA Res.">
        <title>Construction of expression-ready cDNA clones for KIAA genes: manual curation of 330 KIAA cDNA clones.</title>
        <authorList>
            <person name="Nakajima D."/>
            <person name="Okazaki N."/>
            <person name="Yamakawa H."/>
            <person name="Kikuno R."/>
            <person name="Ohara O."/>
            <person name="Nagase T."/>
        </authorList>
    </citation>
    <scope>SEQUENCE REVISION</scope>
</reference>
<reference key="5">
    <citation type="journal article" date="2004" name="Genome Biol.">
        <title>A genome annotation-driven approach to cloning the human ORFeome.</title>
        <authorList>
            <person name="Collins J.E."/>
            <person name="Wright C.L."/>
            <person name="Edwards C.A."/>
            <person name="Davis M.P."/>
            <person name="Grinham J.A."/>
            <person name="Cole C.G."/>
            <person name="Goward M.E."/>
            <person name="Aguado B."/>
            <person name="Mallya M."/>
            <person name="Mokrab Y."/>
            <person name="Huckle E.J."/>
            <person name="Beare D.M."/>
            <person name="Dunham I."/>
        </authorList>
    </citation>
    <scope>NUCLEOTIDE SEQUENCE [LARGE SCALE MRNA] (ISOFORM 1)</scope>
</reference>
<reference key="6">
    <citation type="journal article" date="1999" name="Nature">
        <title>The DNA sequence of human chromosome 22.</title>
        <authorList>
            <person name="Dunham I."/>
            <person name="Hunt A.R."/>
            <person name="Collins J.E."/>
            <person name="Bruskiewich R."/>
            <person name="Beare D.M."/>
            <person name="Clamp M."/>
            <person name="Smink L.J."/>
            <person name="Ainscough R."/>
            <person name="Almeida J.P."/>
            <person name="Babbage A.K."/>
            <person name="Bagguley C."/>
            <person name="Bailey J."/>
            <person name="Barlow K.F."/>
            <person name="Bates K.N."/>
            <person name="Beasley O.P."/>
            <person name="Bird C.P."/>
            <person name="Blakey S.E."/>
            <person name="Bridgeman A.M."/>
            <person name="Buck D."/>
            <person name="Burgess J."/>
            <person name="Burrill W.D."/>
            <person name="Burton J."/>
            <person name="Carder C."/>
            <person name="Carter N.P."/>
            <person name="Chen Y."/>
            <person name="Clark G."/>
            <person name="Clegg S.M."/>
            <person name="Cobley V.E."/>
            <person name="Cole C.G."/>
            <person name="Collier R.E."/>
            <person name="Connor R."/>
            <person name="Conroy D."/>
            <person name="Corby N.R."/>
            <person name="Coville G.J."/>
            <person name="Cox A.V."/>
            <person name="Davis J."/>
            <person name="Dawson E."/>
            <person name="Dhami P.D."/>
            <person name="Dockree C."/>
            <person name="Dodsworth S.J."/>
            <person name="Durbin R.M."/>
            <person name="Ellington A.G."/>
            <person name="Evans K.L."/>
            <person name="Fey J.M."/>
            <person name="Fleming K."/>
            <person name="French L."/>
            <person name="Garner A.A."/>
            <person name="Gilbert J.G.R."/>
            <person name="Goward M.E."/>
            <person name="Grafham D.V."/>
            <person name="Griffiths M.N.D."/>
            <person name="Hall C."/>
            <person name="Hall R.E."/>
            <person name="Hall-Tamlyn G."/>
            <person name="Heathcott R.W."/>
            <person name="Ho S."/>
            <person name="Holmes S."/>
            <person name="Hunt S.E."/>
            <person name="Jones M.C."/>
            <person name="Kershaw J."/>
            <person name="Kimberley A.M."/>
            <person name="King A."/>
            <person name="Laird G.K."/>
            <person name="Langford C.F."/>
            <person name="Leversha M.A."/>
            <person name="Lloyd C."/>
            <person name="Lloyd D.M."/>
            <person name="Martyn I.D."/>
            <person name="Mashreghi-Mohammadi M."/>
            <person name="Matthews L.H."/>
            <person name="Mccann O.T."/>
            <person name="Mcclay J."/>
            <person name="Mclaren S."/>
            <person name="McMurray A.A."/>
            <person name="Milne S.A."/>
            <person name="Mortimore B.J."/>
            <person name="Odell C.N."/>
            <person name="Pavitt R."/>
            <person name="Pearce A.V."/>
            <person name="Pearson D."/>
            <person name="Phillimore B.J.C.T."/>
            <person name="Phillips S.H."/>
            <person name="Plumb R.W."/>
            <person name="Ramsay H."/>
            <person name="Ramsey Y."/>
            <person name="Rogers L."/>
            <person name="Ross M.T."/>
            <person name="Scott C.E."/>
            <person name="Sehra H.K."/>
            <person name="Skuce C.D."/>
            <person name="Smalley S."/>
            <person name="Smith M.L."/>
            <person name="Soderlund C."/>
            <person name="Spragon L."/>
            <person name="Steward C.A."/>
            <person name="Sulston J.E."/>
            <person name="Swann R.M."/>
            <person name="Vaudin M."/>
            <person name="Wall M."/>
            <person name="Wallis J.M."/>
            <person name="Whiteley M.N."/>
            <person name="Willey D.L."/>
            <person name="Williams L."/>
            <person name="Williams S.A."/>
            <person name="Williamson H."/>
            <person name="Wilmer T.E."/>
            <person name="Wilming L."/>
            <person name="Wright C.L."/>
            <person name="Hubbard T."/>
            <person name="Bentley D.R."/>
            <person name="Beck S."/>
            <person name="Rogers J."/>
            <person name="Shimizu N."/>
            <person name="Minoshima S."/>
            <person name="Kawasaki K."/>
            <person name="Sasaki T."/>
            <person name="Asakawa S."/>
            <person name="Kudoh J."/>
            <person name="Shintani A."/>
            <person name="Shibuya K."/>
            <person name="Yoshizaki Y."/>
            <person name="Aoki N."/>
            <person name="Mitsuyama S."/>
            <person name="Roe B.A."/>
            <person name="Chen F."/>
            <person name="Chu L."/>
            <person name="Crabtree J."/>
            <person name="Deschamps S."/>
            <person name="Do A."/>
            <person name="Do T."/>
            <person name="Dorman A."/>
            <person name="Fang F."/>
            <person name="Fu Y."/>
            <person name="Hu P."/>
            <person name="Hua A."/>
            <person name="Kenton S."/>
            <person name="Lai H."/>
            <person name="Lao H.I."/>
            <person name="Lewis J."/>
            <person name="Lewis S."/>
            <person name="Lin S.-P."/>
            <person name="Loh P."/>
            <person name="Malaj E."/>
            <person name="Nguyen T."/>
            <person name="Pan H."/>
            <person name="Phan S."/>
            <person name="Qi S."/>
            <person name="Qian Y."/>
            <person name="Ray L."/>
            <person name="Ren Q."/>
            <person name="Shaull S."/>
            <person name="Sloan D."/>
            <person name="Song L."/>
            <person name="Wang Q."/>
            <person name="Wang Y."/>
            <person name="Wang Z."/>
            <person name="White J."/>
            <person name="Willingham D."/>
            <person name="Wu H."/>
            <person name="Yao Z."/>
            <person name="Zhan M."/>
            <person name="Zhang G."/>
            <person name="Chissoe S."/>
            <person name="Murray J."/>
            <person name="Miller N."/>
            <person name="Minx P."/>
            <person name="Fulton R."/>
            <person name="Johnson D."/>
            <person name="Bemis G."/>
            <person name="Bentley D."/>
            <person name="Bradshaw H."/>
            <person name="Bourne S."/>
            <person name="Cordes M."/>
            <person name="Du Z."/>
            <person name="Fulton L."/>
            <person name="Goela D."/>
            <person name="Graves T."/>
            <person name="Hawkins J."/>
            <person name="Hinds K."/>
            <person name="Kemp K."/>
            <person name="Latreille P."/>
            <person name="Layman D."/>
            <person name="Ozersky P."/>
            <person name="Rohlfing T."/>
            <person name="Scheet P."/>
            <person name="Walker C."/>
            <person name="Wamsley A."/>
            <person name="Wohldmann P."/>
            <person name="Pepin K."/>
            <person name="Nelson J."/>
            <person name="Korf I."/>
            <person name="Bedell J.A."/>
            <person name="Hillier L.W."/>
            <person name="Mardis E."/>
            <person name="Waterston R."/>
            <person name="Wilson R."/>
            <person name="Emanuel B.S."/>
            <person name="Shaikh T."/>
            <person name="Kurahashi H."/>
            <person name="Saitta S."/>
            <person name="Budarf M.L."/>
            <person name="McDermid H.E."/>
            <person name="Johnson A."/>
            <person name="Wong A.C.C."/>
            <person name="Morrow B.E."/>
            <person name="Edelmann L."/>
            <person name="Kim U.J."/>
            <person name="Shizuya H."/>
            <person name="Simon M.I."/>
            <person name="Dumanski J.P."/>
            <person name="Peyrard M."/>
            <person name="Kedra D."/>
            <person name="Seroussi E."/>
            <person name="Fransson I."/>
            <person name="Tapia I."/>
            <person name="Bruder C.E."/>
            <person name="O'Brien K.P."/>
            <person name="Wilkinson P."/>
            <person name="Bodenteich A."/>
            <person name="Hartman K."/>
            <person name="Hu X."/>
            <person name="Khan A.S."/>
            <person name="Lane L."/>
            <person name="Tilahun Y."/>
            <person name="Wright H."/>
        </authorList>
    </citation>
    <scope>NUCLEOTIDE SEQUENCE [LARGE SCALE GENOMIC DNA]</scope>
</reference>
<reference key="7">
    <citation type="journal article" date="2004" name="Genome Res.">
        <title>The status, quality, and expansion of the NIH full-length cDNA project: the Mammalian Gene Collection (MGC).</title>
        <authorList>
            <consortium name="The MGC Project Team"/>
        </authorList>
    </citation>
    <scope>NUCLEOTIDE SEQUENCE [LARGE SCALE MRNA] (ISOFORM 1)</scope>
    <source>
        <tissue>Placenta</tissue>
    </source>
</reference>
<reference key="8">
    <citation type="journal article" date="2007" name="BMC Genomics">
        <title>The full-ORF clone resource of the German cDNA consortium.</title>
        <authorList>
            <person name="Bechtel S."/>
            <person name="Rosenfelder H."/>
            <person name="Duda A."/>
            <person name="Schmidt C.P."/>
            <person name="Ernst U."/>
            <person name="Wellenreuther R."/>
            <person name="Mehrle A."/>
            <person name="Schuster C."/>
            <person name="Bahr A."/>
            <person name="Bloecker H."/>
            <person name="Heubner D."/>
            <person name="Hoerlein A."/>
            <person name="Michel G."/>
            <person name="Wedler H."/>
            <person name="Koehrer K."/>
            <person name="Ottenwaelder B."/>
            <person name="Poustka A."/>
            <person name="Wiemann S."/>
            <person name="Schupp I."/>
        </authorList>
    </citation>
    <scope>NUCLEOTIDE SEQUENCE [LARGE SCALE MRNA] OF 301-615</scope>
    <source>
        <tissue>Testis</tissue>
    </source>
</reference>
<reference key="9">
    <citation type="journal article" date="2011" name="BMC Syst. Biol.">
        <title>Initial characterization of the human central proteome.</title>
        <authorList>
            <person name="Burkard T.R."/>
            <person name="Planyavsky M."/>
            <person name="Kaupe I."/>
            <person name="Breitwieser F.P."/>
            <person name="Buerckstuemmer T."/>
            <person name="Bennett K.L."/>
            <person name="Superti-Furga G."/>
            <person name="Colinge J."/>
        </authorList>
    </citation>
    <scope>IDENTIFICATION BY MASS SPECTROMETRY [LARGE SCALE ANALYSIS]</scope>
</reference>
<reference key="10">
    <citation type="journal article" date="2013" name="J. Proteome Res.">
        <title>Toward a comprehensive characterization of a human cancer cell phosphoproteome.</title>
        <authorList>
            <person name="Zhou H."/>
            <person name="Di Palma S."/>
            <person name="Preisinger C."/>
            <person name="Peng M."/>
            <person name="Polat A.N."/>
            <person name="Heck A.J."/>
            <person name="Mohammed S."/>
        </authorList>
    </citation>
    <scope>PHOSPHORYLATION [LARGE SCALE ANALYSIS] AT SER-166; SER-169; SER-197; SER-348 AND SER-412</scope>
    <scope>IDENTIFICATION BY MASS SPECTROMETRY [LARGE SCALE ANALYSIS]</scope>
    <source>
        <tissue>Erythroleukemia</tissue>
    </source>
</reference>
<dbReference type="EMBL" id="AJ313204">
    <property type="protein sequence ID" value="CAC70715.1"/>
    <property type="molecule type" value="mRNA"/>
</dbReference>
<dbReference type="EMBL" id="AF349035">
    <property type="protein sequence ID" value="AAK72951.1"/>
    <property type="molecule type" value="mRNA"/>
</dbReference>
<dbReference type="EMBL" id="AB028943">
    <property type="protein sequence ID" value="BAA82972.2"/>
    <property type="status" value="ALT_INIT"/>
    <property type="molecule type" value="mRNA"/>
</dbReference>
<dbReference type="EMBL" id="CR456377">
    <property type="protein sequence ID" value="CAG30263.1"/>
    <property type="molecule type" value="mRNA"/>
</dbReference>
<dbReference type="EMBL" id="AP000557">
    <property type="status" value="NOT_ANNOTATED_CDS"/>
    <property type="molecule type" value="Genomic_DNA"/>
</dbReference>
<dbReference type="EMBL" id="BC094787">
    <property type="protein sequence ID" value="AAH94787.1"/>
    <property type="molecule type" value="mRNA"/>
</dbReference>
<dbReference type="EMBL" id="AL162003">
    <property type="protein sequence ID" value="CAB82344.1"/>
    <property type="molecule type" value="mRNA"/>
</dbReference>
<dbReference type="CCDS" id="CCDS13789.1">
    <molecule id="Q96JB3-1"/>
</dbReference>
<dbReference type="PIR" id="T47181">
    <property type="entry name" value="T47181"/>
</dbReference>
<dbReference type="RefSeq" id="NP_055909.2">
    <molecule id="Q96JB3-1"/>
    <property type="nucleotide sequence ID" value="NM_015094.3"/>
</dbReference>
<dbReference type="RefSeq" id="XP_011528309.1">
    <property type="nucleotide sequence ID" value="XM_011530007.2"/>
</dbReference>
<dbReference type="RefSeq" id="XP_011528310.1">
    <molecule id="Q96JB3-1"/>
    <property type="nucleotide sequence ID" value="XM_011530008.4"/>
</dbReference>
<dbReference type="RefSeq" id="XP_011528311.1">
    <molecule id="Q96JB3-1"/>
    <property type="nucleotide sequence ID" value="XM_011530009.2"/>
</dbReference>
<dbReference type="RefSeq" id="XP_011528312.1">
    <property type="nucleotide sequence ID" value="XM_011530010.2"/>
</dbReference>
<dbReference type="RefSeq" id="XP_016884158.1">
    <molecule id="Q96JB3-2"/>
    <property type="nucleotide sequence ID" value="XM_017028669.3"/>
</dbReference>
<dbReference type="PDB" id="7TXC">
    <property type="method" value="X-ray"/>
    <property type="resolution" value="3.04 A"/>
    <property type="chains" value="E=503-615"/>
</dbReference>
<dbReference type="PDBsum" id="7TXC"/>
<dbReference type="SMR" id="Q96JB3"/>
<dbReference type="BioGRID" id="116741">
    <property type="interactions" value="57"/>
</dbReference>
<dbReference type="FunCoup" id="Q96JB3">
    <property type="interactions" value="722"/>
</dbReference>
<dbReference type="IntAct" id="Q96JB3">
    <property type="interactions" value="53"/>
</dbReference>
<dbReference type="MINT" id="Q96JB3"/>
<dbReference type="STRING" id="9606.ENSP00000387757"/>
<dbReference type="GlyGen" id="Q96JB3">
    <property type="glycosylation" value="1 site"/>
</dbReference>
<dbReference type="iPTMnet" id="Q96JB3"/>
<dbReference type="PhosphoSitePlus" id="Q96JB3"/>
<dbReference type="SwissPalm" id="Q96JB3"/>
<dbReference type="BioMuta" id="HIC2"/>
<dbReference type="DMDM" id="20454983"/>
<dbReference type="jPOST" id="Q96JB3"/>
<dbReference type="MassIVE" id="Q96JB3"/>
<dbReference type="PaxDb" id="9606-ENSP00000387757"/>
<dbReference type="PeptideAtlas" id="Q96JB3"/>
<dbReference type="ProteomicsDB" id="76928">
    <molecule id="Q96JB3-1"/>
</dbReference>
<dbReference type="ProteomicsDB" id="76929">
    <molecule id="Q96JB3-2"/>
</dbReference>
<dbReference type="Pumba" id="Q96JB3"/>
<dbReference type="Antibodypedia" id="8461">
    <property type="antibodies" value="252 antibodies from 30 providers"/>
</dbReference>
<dbReference type="DNASU" id="23119"/>
<dbReference type="Ensembl" id="ENST00000407464.7">
    <molecule id="Q96JB3-1"/>
    <property type="protein sequence ID" value="ENSP00000385319.2"/>
    <property type="gene ID" value="ENSG00000169635.10"/>
</dbReference>
<dbReference type="Ensembl" id="ENST00000407598.2">
    <molecule id="Q96JB3-1"/>
    <property type="protein sequence ID" value="ENSP00000384889.2"/>
    <property type="gene ID" value="ENSG00000169635.10"/>
</dbReference>
<dbReference type="Ensembl" id="ENST00000443632.2">
    <molecule id="Q96JB3-1"/>
    <property type="protein sequence ID" value="ENSP00000387757.2"/>
    <property type="gene ID" value="ENSG00000169635.10"/>
</dbReference>
<dbReference type="GeneID" id="23119"/>
<dbReference type="KEGG" id="hsa:23119"/>
<dbReference type="MANE-Select" id="ENST00000407464.7">
    <property type="protein sequence ID" value="ENSP00000385319.2"/>
    <property type="RefSeq nucleotide sequence ID" value="NM_015094.3"/>
    <property type="RefSeq protein sequence ID" value="NP_055909.2"/>
</dbReference>
<dbReference type="UCSC" id="uc002zur.5">
    <molecule id="Q96JB3-1"/>
    <property type="organism name" value="human"/>
</dbReference>
<dbReference type="AGR" id="HGNC:18595"/>
<dbReference type="CTD" id="23119"/>
<dbReference type="DisGeNET" id="23119"/>
<dbReference type="GeneCards" id="HIC2"/>
<dbReference type="HGNC" id="HGNC:18595">
    <property type="gene designation" value="HIC2"/>
</dbReference>
<dbReference type="HPA" id="ENSG00000169635">
    <property type="expression patterns" value="Low tissue specificity"/>
</dbReference>
<dbReference type="MIM" id="607712">
    <property type="type" value="gene"/>
</dbReference>
<dbReference type="neXtProt" id="NX_Q96JB3"/>
<dbReference type="OpenTargets" id="ENSG00000169635"/>
<dbReference type="PharmGKB" id="PA38357"/>
<dbReference type="VEuPathDB" id="HostDB:ENSG00000169635"/>
<dbReference type="eggNOG" id="KOG1721">
    <property type="taxonomic scope" value="Eukaryota"/>
</dbReference>
<dbReference type="GeneTree" id="ENSGT00940000159978"/>
<dbReference type="HOGENOM" id="CLU_015352_1_0_1"/>
<dbReference type="InParanoid" id="Q96JB3"/>
<dbReference type="OMA" id="TGHNNHY"/>
<dbReference type="PAN-GO" id="Q96JB3">
    <property type="GO annotations" value="4 GO annotations based on evolutionary models"/>
</dbReference>
<dbReference type="PhylomeDB" id="Q96JB3"/>
<dbReference type="TreeFam" id="TF333488"/>
<dbReference type="PathwayCommons" id="Q96JB3"/>
<dbReference type="SignaLink" id="Q96JB3"/>
<dbReference type="BioGRID-ORCS" id="23119">
    <property type="hits" value="26 hits in 1212 CRISPR screens"/>
</dbReference>
<dbReference type="ChiTaRS" id="HIC2">
    <property type="organism name" value="human"/>
</dbReference>
<dbReference type="GeneWiki" id="HIC2"/>
<dbReference type="GenomeRNAi" id="23119"/>
<dbReference type="Pharos" id="Q96JB3">
    <property type="development level" value="Tbio"/>
</dbReference>
<dbReference type="PRO" id="PR:Q96JB3"/>
<dbReference type="Proteomes" id="UP000005640">
    <property type="component" value="Chromosome 22"/>
</dbReference>
<dbReference type="RNAct" id="Q96JB3">
    <property type="molecule type" value="protein"/>
</dbReference>
<dbReference type="Bgee" id="ENSG00000169635">
    <property type="expression patterns" value="Expressed in secondary oocyte and 188 other cell types or tissues"/>
</dbReference>
<dbReference type="GO" id="GO:0005654">
    <property type="term" value="C:nucleoplasm"/>
    <property type="evidence" value="ECO:0000314"/>
    <property type="project" value="HPA"/>
</dbReference>
<dbReference type="GO" id="GO:0005634">
    <property type="term" value="C:nucleus"/>
    <property type="evidence" value="ECO:0000314"/>
    <property type="project" value="UniProtKB"/>
</dbReference>
<dbReference type="GO" id="GO:0005886">
    <property type="term" value="C:plasma membrane"/>
    <property type="evidence" value="ECO:0000314"/>
    <property type="project" value="HPA"/>
</dbReference>
<dbReference type="GO" id="GO:0003677">
    <property type="term" value="F:DNA binding"/>
    <property type="evidence" value="ECO:0000303"/>
    <property type="project" value="UniProtKB"/>
</dbReference>
<dbReference type="GO" id="GO:0001227">
    <property type="term" value="F:DNA-binding transcription repressor activity, RNA polymerase II-specific"/>
    <property type="evidence" value="ECO:0000318"/>
    <property type="project" value="GO_Central"/>
</dbReference>
<dbReference type="GO" id="GO:0000978">
    <property type="term" value="F:RNA polymerase II cis-regulatory region sequence-specific DNA binding"/>
    <property type="evidence" value="ECO:0000318"/>
    <property type="project" value="GO_Central"/>
</dbReference>
<dbReference type="GO" id="GO:0008270">
    <property type="term" value="F:zinc ion binding"/>
    <property type="evidence" value="ECO:0007669"/>
    <property type="project" value="UniProtKB-KW"/>
</dbReference>
<dbReference type="GO" id="GO:0045892">
    <property type="term" value="P:negative regulation of DNA-templated transcription"/>
    <property type="evidence" value="ECO:0000303"/>
    <property type="project" value="UniProtKB"/>
</dbReference>
<dbReference type="GO" id="GO:0000122">
    <property type="term" value="P:negative regulation of transcription by RNA polymerase II"/>
    <property type="evidence" value="ECO:0000318"/>
    <property type="project" value="GO_Central"/>
</dbReference>
<dbReference type="GO" id="GO:0001817">
    <property type="term" value="P:regulation of cytokine production"/>
    <property type="evidence" value="ECO:0000318"/>
    <property type="project" value="GO_Central"/>
</dbReference>
<dbReference type="GO" id="GO:0002682">
    <property type="term" value="P:regulation of immune system process"/>
    <property type="evidence" value="ECO:0000318"/>
    <property type="project" value="GO_Central"/>
</dbReference>
<dbReference type="CDD" id="cd18334">
    <property type="entry name" value="BTB_POZ_ZBTB30_HIC2"/>
    <property type="match status" value="1"/>
</dbReference>
<dbReference type="FunFam" id="3.30.160.60:FF:000195">
    <property type="entry name" value="Hypermethylated in cancer 1 protein-like"/>
    <property type="match status" value="1"/>
</dbReference>
<dbReference type="FunFam" id="3.30.160.60:FF:000536">
    <property type="entry name" value="hypermethylated in cancer 2 protein-like"/>
    <property type="match status" value="1"/>
</dbReference>
<dbReference type="FunFam" id="3.30.160.60:FF:000746">
    <property type="entry name" value="hypermethylated in cancer 2 protein-like"/>
    <property type="match status" value="1"/>
</dbReference>
<dbReference type="FunFam" id="3.30.710.10:FF:000032">
    <property type="entry name" value="hypermethylated in cancer 2 protein-like"/>
    <property type="match status" value="1"/>
</dbReference>
<dbReference type="FunFam" id="3.30.160.60:FF:000145">
    <property type="entry name" value="Zinc finger protein 574"/>
    <property type="match status" value="1"/>
</dbReference>
<dbReference type="Gene3D" id="3.30.160.60">
    <property type="entry name" value="Classic Zinc Finger"/>
    <property type="match status" value="5"/>
</dbReference>
<dbReference type="Gene3D" id="3.30.710.10">
    <property type="entry name" value="Potassium Channel Kv1.1, Chain A"/>
    <property type="match status" value="1"/>
</dbReference>
<dbReference type="InterPro" id="IPR000210">
    <property type="entry name" value="BTB/POZ_dom"/>
</dbReference>
<dbReference type="InterPro" id="IPR011333">
    <property type="entry name" value="SKP1/BTB/POZ_sf"/>
</dbReference>
<dbReference type="InterPro" id="IPR036236">
    <property type="entry name" value="Znf_C2H2_sf"/>
</dbReference>
<dbReference type="InterPro" id="IPR013087">
    <property type="entry name" value="Znf_C2H2_type"/>
</dbReference>
<dbReference type="PANTHER" id="PTHR24394:SF22">
    <property type="entry name" value="HYPERMETHYLATED IN CANCER 2 PROTEIN"/>
    <property type="match status" value="1"/>
</dbReference>
<dbReference type="PANTHER" id="PTHR24394">
    <property type="entry name" value="ZINC FINGER PROTEIN"/>
    <property type="match status" value="1"/>
</dbReference>
<dbReference type="Pfam" id="PF00651">
    <property type="entry name" value="BTB"/>
    <property type="match status" value="1"/>
</dbReference>
<dbReference type="Pfam" id="PF00096">
    <property type="entry name" value="zf-C2H2"/>
    <property type="match status" value="4"/>
</dbReference>
<dbReference type="SMART" id="SM00225">
    <property type="entry name" value="BTB"/>
    <property type="match status" value="1"/>
</dbReference>
<dbReference type="SMART" id="SM00355">
    <property type="entry name" value="ZnF_C2H2"/>
    <property type="match status" value="5"/>
</dbReference>
<dbReference type="SUPFAM" id="SSF57667">
    <property type="entry name" value="beta-beta-alpha zinc fingers"/>
    <property type="match status" value="3"/>
</dbReference>
<dbReference type="SUPFAM" id="SSF54695">
    <property type="entry name" value="POZ domain"/>
    <property type="match status" value="1"/>
</dbReference>
<dbReference type="PROSITE" id="PS50097">
    <property type="entry name" value="BTB"/>
    <property type="match status" value="1"/>
</dbReference>
<dbReference type="PROSITE" id="PS00028">
    <property type="entry name" value="ZINC_FINGER_C2H2_1"/>
    <property type="match status" value="5"/>
</dbReference>
<dbReference type="PROSITE" id="PS50157">
    <property type="entry name" value="ZINC_FINGER_C2H2_2"/>
    <property type="match status" value="5"/>
</dbReference>
<feature type="chain" id="PRO_0000046945" description="Hypermethylated in cancer 2 protein">
    <location>
        <begin position="1"/>
        <end position="615"/>
    </location>
</feature>
<feature type="domain" description="BTB" evidence="1">
    <location>
        <begin position="46"/>
        <end position="109"/>
    </location>
</feature>
<feature type="zinc finger region" description="C2H2-type 1" evidence="2">
    <location>
        <begin position="442"/>
        <end position="469"/>
    </location>
</feature>
<feature type="zinc finger region" description="C2H2-type 2" evidence="2">
    <location>
        <begin position="505"/>
        <end position="532"/>
    </location>
</feature>
<feature type="zinc finger region" description="C2H2-type 3" evidence="2">
    <location>
        <begin position="533"/>
        <end position="560"/>
    </location>
</feature>
<feature type="zinc finger region" description="C2H2-type 4" evidence="2">
    <location>
        <begin position="561"/>
        <end position="588"/>
    </location>
</feature>
<feature type="zinc finger region" description="C2H2-type 5" evidence="2">
    <location>
        <begin position="589"/>
        <end position="615"/>
    </location>
</feature>
<feature type="region of interest" description="Disordered" evidence="3">
    <location>
        <begin position="144"/>
        <end position="167"/>
    </location>
</feature>
<feature type="region of interest" description="Disordered" evidence="3">
    <location>
        <begin position="182"/>
        <end position="208"/>
    </location>
</feature>
<feature type="region of interest" description="Disordered" evidence="3">
    <location>
        <begin position="229"/>
        <end position="421"/>
    </location>
</feature>
<feature type="region of interest" description="Binding to CtBP">
    <location>
        <begin position="246"/>
        <end position="250"/>
    </location>
</feature>
<feature type="compositionally biased region" description="Low complexity" evidence="3">
    <location>
        <begin position="280"/>
        <end position="296"/>
    </location>
</feature>
<feature type="compositionally biased region" description="Basic and acidic residues" evidence="3">
    <location>
        <begin position="336"/>
        <end position="356"/>
    </location>
</feature>
<feature type="compositionally biased region" description="Low complexity" evidence="3">
    <location>
        <begin position="379"/>
        <end position="388"/>
    </location>
</feature>
<feature type="modified residue" description="Phosphoserine" evidence="7">
    <location>
        <position position="166"/>
    </location>
</feature>
<feature type="modified residue" description="Phosphoserine" evidence="7">
    <location>
        <position position="169"/>
    </location>
</feature>
<feature type="modified residue" description="Phosphoserine" evidence="7">
    <location>
        <position position="197"/>
    </location>
</feature>
<feature type="modified residue" description="Phosphoserine" evidence="7">
    <location>
        <position position="348"/>
    </location>
</feature>
<feature type="modified residue" description="Phosphoserine" evidence="7">
    <location>
        <position position="412"/>
    </location>
</feature>
<feature type="splice variant" id="VSP_006829" description="In isoform 2." evidence="5">
    <location>
        <begin position="1"/>
        <end position="18"/>
    </location>
</feature>
<feature type="sequence conflict" description="In Ref. 1; CAC70715." evidence="6" ref="1">
    <original>IIM</original>
    <variation>TIR</variation>
    <location>
        <begin position="49"/>
        <end position="51"/>
    </location>
</feature>
<feature type="sequence conflict" description="In Ref. 3; BAA82972." evidence="6" ref="3">
    <original>Q</original>
    <variation>R</variation>
    <location>
        <position position="176"/>
    </location>
</feature>
<feature type="strand" evidence="8">
    <location>
        <begin position="508"/>
        <end position="511"/>
    </location>
</feature>
<feature type="strand" evidence="8">
    <location>
        <begin position="513"/>
        <end position="516"/>
    </location>
</feature>
<feature type="helix" evidence="8">
    <location>
        <begin position="517"/>
        <end position="524"/>
    </location>
</feature>
<feature type="helix" evidence="8">
    <location>
        <begin position="525"/>
        <end position="528"/>
    </location>
</feature>
<feature type="strand" evidence="8">
    <location>
        <begin position="536"/>
        <end position="538"/>
    </location>
</feature>
<feature type="strand" evidence="8">
    <location>
        <begin position="541"/>
        <end position="544"/>
    </location>
</feature>
<feature type="helix" evidence="8">
    <location>
        <begin position="545"/>
        <end position="555"/>
    </location>
</feature>
<feature type="strand" evidence="8">
    <location>
        <begin position="556"/>
        <end position="558"/>
    </location>
</feature>
<feature type="strand" evidence="8">
    <location>
        <begin position="560"/>
        <end position="562"/>
    </location>
</feature>
<feature type="turn" evidence="8">
    <location>
        <begin position="564"/>
        <end position="566"/>
    </location>
</feature>
<feature type="strand" evidence="8">
    <location>
        <begin position="569"/>
        <end position="572"/>
    </location>
</feature>
<feature type="helix" evidence="8">
    <location>
        <begin position="573"/>
        <end position="579"/>
    </location>
</feature>
<feature type="helix" evidence="8">
    <location>
        <begin position="580"/>
        <end position="583"/>
    </location>
</feature>
<keyword id="KW-0002">3D-structure</keyword>
<keyword id="KW-0025">Alternative splicing</keyword>
<keyword id="KW-0238">DNA-binding</keyword>
<keyword id="KW-0479">Metal-binding</keyword>
<keyword id="KW-0539">Nucleus</keyword>
<keyword id="KW-0597">Phosphoprotein</keyword>
<keyword id="KW-1267">Proteomics identification</keyword>
<keyword id="KW-1185">Reference proteome</keyword>
<keyword id="KW-0677">Repeat</keyword>
<keyword id="KW-0678">Repressor</keyword>
<keyword id="KW-0804">Transcription</keyword>
<keyword id="KW-0805">Transcription regulation</keyword>
<keyword id="KW-0862">Zinc</keyword>
<keyword id="KW-0863">Zinc-finger</keyword>
<evidence type="ECO:0000255" key="1">
    <source>
        <dbReference type="PROSITE-ProRule" id="PRU00037"/>
    </source>
</evidence>
<evidence type="ECO:0000255" key="2">
    <source>
        <dbReference type="PROSITE-ProRule" id="PRU00042"/>
    </source>
</evidence>
<evidence type="ECO:0000256" key="3">
    <source>
        <dbReference type="SAM" id="MobiDB-lite"/>
    </source>
</evidence>
<evidence type="ECO:0000269" key="4">
    <source>
    </source>
</evidence>
<evidence type="ECO:0000303" key="5">
    <source ref="2"/>
</evidence>
<evidence type="ECO:0000305" key="6"/>
<evidence type="ECO:0007744" key="7">
    <source>
    </source>
</evidence>
<evidence type="ECO:0007829" key="8">
    <source>
        <dbReference type="PDB" id="7TXC"/>
    </source>
</evidence>
<gene>
    <name type="primary">HIC2</name>
    <name type="synonym">HRG22</name>
    <name type="synonym">KIAA1020</name>
    <name type="synonym">ZBTB30</name>
</gene>
<name>HIC2_HUMAN</name>
<accession>Q96JB3</accession>
<accession>Q504T6</accession>
<accession>Q96KR3</accession>
<accession>Q9NSM9</accession>
<accession>Q9UPX9</accession>
<organism>
    <name type="scientific">Homo sapiens</name>
    <name type="common">Human</name>
    <dbReference type="NCBI Taxonomy" id="9606"/>
    <lineage>
        <taxon>Eukaryota</taxon>
        <taxon>Metazoa</taxon>
        <taxon>Chordata</taxon>
        <taxon>Craniata</taxon>
        <taxon>Vertebrata</taxon>
        <taxon>Euteleostomi</taxon>
        <taxon>Mammalia</taxon>
        <taxon>Eutheria</taxon>
        <taxon>Euarchontoglires</taxon>
        <taxon>Primates</taxon>
        <taxon>Haplorrhini</taxon>
        <taxon>Catarrhini</taxon>
        <taxon>Hominidae</taxon>
        <taxon>Homo</taxon>
    </lineage>
</organism>
<sequence>MVSGPLALRWCAWAGRGDMGPDMELPSHSKQLLLQLNQQRTKGFLCDVIIMVENSIFRAHKNVLAASSIYFKSLVLHDNLINLDTDMVSSTVFQQILDFIYTGKLLPSDQPAEPNFSTLLTAASYLQLPELAALCRRKLKRAGKPFGSGRAGSTGMGRPPRSQRLSTASVIQARYQGLVDGRKGAHAPQELPQAKGSDDELFLGGSNQDSVQGLGRAVCPAGGEAGLGGCSSSTNGSSGGCEQELGLDLSKKSPPLPPATPGPHLTPDDAAQLSDSQHGSPPAASAPPVANSASYSELGGTPDEPMDLEGAEDNHLSLLEAPGGQPRKSLRHSTRKKEWGKKEPVAGSPFERREAGPKGPCPGEEGEGVGDRVPNGILASGAGPSGPYGEPPYPCKEEEENGKDASEDSAQSGSEGGSGHASAHYMYRQEGYETVSYGDNLYVCIPCAKGFPSSEQLNAHVETHTEEELFIKEEGAYETGSGGAEEEAEDLSAPSAAYTAEPRPFKCSVCEKTYKDPATLRQHEKTHWLTRPFPCNICGKMFTQRGTMTRHMRSHLGLKPFACDECGMRFTRQYRLTEHMRVHSGEKPYECQLCGGKFTQQRNLISHLRMHTSPS</sequence>
<proteinExistence type="evidence at protein level"/>
<protein>
    <recommendedName>
        <fullName>Hypermethylated in cancer 2 protein</fullName>
        <shortName>Hic-2</shortName>
    </recommendedName>
    <alternativeName>
        <fullName>HIC1-related gene on chromosome 22 protein</fullName>
    </alternativeName>
    <alternativeName>
        <fullName>Hic-3</fullName>
    </alternativeName>
    <alternativeName>
        <fullName>Zinc finger and BTB domain-containing protein 30</fullName>
    </alternativeName>
</protein>